<dbReference type="EC" id="6.3.5.-" evidence="1"/>
<dbReference type="EMBL" id="CP000378">
    <property type="protein sequence ID" value="ABF77392.1"/>
    <property type="molecule type" value="Genomic_DNA"/>
</dbReference>
<dbReference type="SMR" id="Q1BSL3"/>
<dbReference type="HOGENOM" id="CLU_019240_0_0_4"/>
<dbReference type="GO" id="GO:0050566">
    <property type="term" value="F:asparaginyl-tRNA synthase (glutamine-hydrolyzing) activity"/>
    <property type="evidence" value="ECO:0007669"/>
    <property type="project" value="RHEA"/>
</dbReference>
<dbReference type="GO" id="GO:0005524">
    <property type="term" value="F:ATP binding"/>
    <property type="evidence" value="ECO:0007669"/>
    <property type="project" value="UniProtKB-KW"/>
</dbReference>
<dbReference type="GO" id="GO:0050567">
    <property type="term" value="F:glutaminyl-tRNA synthase (glutamine-hydrolyzing) activity"/>
    <property type="evidence" value="ECO:0007669"/>
    <property type="project" value="UniProtKB-UniRule"/>
</dbReference>
<dbReference type="GO" id="GO:0070681">
    <property type="term" value="P:glutaminyl-tRNAGln biosynthesis via transamidation"/>
    <property type="evidence" value="ECO:0007669"/>
    <property type="project" value="TreeGrafter"/>
</dbReference>
<dbReference type="GO" id="GO:0006412">
    <property type="term" value="P:translation"/>
    <property type="evidence" value="ECO:0007669"/>
    <property type="project" value="UniProtKB-UniRule"/>
</dbReference>
<dbReference type="FunFam" id="1.10.10.410:FF:000001">
    <property type="entry name" value="Aspartyl/glutamyl-tRNA(Asn/Gln) amidotransferase subunit B"/>
    <property type="match status" value="1"/>
</dbReference>
<dbReference type="FunFam" id="1.10.150.380:FF:000001">
    <property type="entry name" value="Aspartyl/glutamyl-tRNA(Asn/Gln) amidotransferase subunit B"/>
    <property type="match status" value="1"/>
</dbReference>
<dbReference type="Gene3D" id="1.10.10.410">
    <property type="match status" value="1"/>
</dbReference>
<dbReference type="Gene3D" id="1.10.150.380">
    <property type="entry name" value="GatB domain, N-terminal subdomain"/>
    <property type="match status" value="1"/>
</dbReference>
<dbReference type="HAMAP" id="MF_00121">
    <property type="entry name" value="GatB"/>
    <property type="match status" value="1"/>
</dbReference>
<dbReference type="InterPro" id="IPR017959">
    <property type="entry name" value="Asn/Gln-tRNA_amidoTrfase_suB/E"/>
</dbReference>
<dbReference type="InterPro" id="IPR006075">
    <property type="entry name" value="Asn/Gln-tRNA_Trfase_suB/E_cat"/>
</dbReference>
<dbReference type="InterPro" id="IPR018027">
    <property type="entry name" value="Asn/Gln_amidotransferase"/>
</dbReference>
<dbReference type="InterPro" id="IPR003789">
    <property type="entry name" value="Asn/Gln_tRNA_amidoTrase-B-like"/>
</dbReference>
<dbReference type="InterPro" id="IPR004413">
    <property type="entry name" value="GatB"/>
</dbReference>
<dbReference type="InterPro" id="IPR042114">
    <property type="entry name" value="GatB_C_1"/>
</dbReference>
<dbReference type="InterPro" id="IPR023168">
    <property type="entry name" value="GatB_Yqey_C_2"/>
</dbReference>
<dbReference type="InterPro" id="IPR017958">
    <property type="entry name" value="Gln-tRNA_amidoTrfase_suB_CS"/>
</dbReference>
<dbReference type="InterPro" id="IPR014746">
    <property type="entry name" value="Gln_synth/guanido_kin_cat_dom"/>
</dbReference>
<dbReference type="NCBIfam" id="TIGR00133">
    <property type="entry name" value="gatB"/>
    <property type="match status" value="1"/>
</dbReference>
<dbReference type="NCBIfam" id="NF004012">
    <property type="entry name" value="PRK05477.1-2"/>
    <property type="match status" value="1"/>
</dbReference>
<dbReference type="NCBIfam" id="NF004014">
    <property type="entry name" value="PRK05477.1-4"/>
    <property type="match status" value="1"/>
</dbReference>
<dbReference type="NCBIfam" id="NF004015">
    <property type="entry name" value="PRK05477.1-5"/>
    <property type="match status" value="1"/>
</dbReference>
<dbReference type="PANTHER" id="PTHR11659">
    <property type="entry name" value="GLUTAMYL-TRNA GLN AMIDOTRANSFERASE SUBUNIT B MITOCHONDRIAL AND PROKARYOTIC PET112-RELATED"/>
    <property type="match status" value="1"/>
</dbReference>
<dbReference type="PANTHER" id="PTHR11659:SF0">
    <property type="entry name" value="GLUTAMYL-TRNA(GLN) AMIDOTRANSFERASE SUBUNIT B, MITOCHONDRIAL"/>
    <property type="match status" value="1"/>
</dbReference>
<dbReference type="Pfam" id="PF02934">
    <property type="entry name" value="GatB_N"/>
    <property type="match status" value="1"/>
</dbReference>
<dbReference type="Pfam" id="PF02637">
    <property type="entry name" value="GatB_Yqey"/>
    <property type="match status" value="1"/>
</dbReference>
<dbReference type="SMART" id="SM00845">
    <property type="entry name" value="GatB_Yqey"/>
    <property type="match status" value="1"/>
</dbReference>
<dbReference type="SUPFAM" id="SSF89095">
    <property type="entry name" value="GatB/YqeY motif"/>
    <property type="match status" value="1"/>
</dbReference>
<dbReference type="SUPFAM" id="SSF55931">
    <property type="entry name" value="Glutamine synthetase/guanido kinase"/>
    <property type="match status" value="1"/>
</dbReference>
<dbReference type="PROSITE" id="PS01234">
    <property type="entry name" value="GATB"/>
    <property type="match status" value="1"/>
</dbReference>
<organism>
    <name type="scientific">Burkholderia orbicola (strain AU 1054)</name>
    <dbReference type="NCBI Taxonomy" id="331271"/>
    <lineage>
        <taxon>Bacteria</taxon>
        <taxon>Pseudomonadati</taxon>
        <taxon>Pseudomonadota</taxon>
        <taxon>Betaproteobacteria</taxon>
        <taxon>Burkholderiales</taxon>
        <taxon>Burkholderiaceae</taxon>
        <taxon>Burkholderia</taxon>
        <taxon>Burkholderia cepacia complex</taxon>
        <taxon>Burkholderia orbicola</taxon>
    </lineage>
</organism>
<reference key="1">
    <citation type="submission" date="2006-05" db="EMBL/GenBank/DDBJ databases">
        <title>Complete sequence of chromosome 1 of Burkholderia cenocepacia AU 1054.</title>
        <authorList>
            <consortium name="US DOE Joint Genome Institute"/>
            <person name="Copeland A."/>
            <person name="Lucas S."/>
            <person name="Lapidus A."/>
            <person name="Barry K."/>
            <person name="Detter J.C."/>
            <person name="Glavina del Rio T."/>
            <person name="Hammon N."/>
            <person name="Israni S."/>
            <person name="Dalin E."/>
            <person name="Tice H."/>
            <person name="Pitluck S."/>
            <person name="Chain P."/>
            <person name="Malfatti S."/>
            <person name="Shin M."/>
            <person name="Vergez L."/>
            <person name="Schmutz J."/>
            <person name="Larimer F."/>
            <person name="Land M."/>
            <person name="Hauser L."/>
            <person name="Kyrpides N."/>
            <person name="Lykidis A."/>
            <person name="LiPuma J.J."/>
            <person name="Konstantinidis K."/>
            <person name="Tiedje J.M."/>
            <person name="Richardson P."/>
        </authorList>
    </citation>
    <scope>NUCLEOTIDE SEQUENCE [LARGE SCALE GENOMIC DNA]</scope>
    <source>
        <strain>AU 1054</strain>
    </source>
</reference>
<protein>
    <recommendedName>
        <fullName evidence="1">Aspartyl/glutamyl-tRNA(Asn/Gln) amidotransferase subunit B</fullName>
        <shortName evidence="1">Asp/Glu-ADT subunit B</shortName>
        <ecNumber evidence="1">6.3.5.-</ecNumber>
    </recommendedName>
</protein>
<evidence type="ECO:0000255" key="1">
    <source>
        <dbReference type="HAMAP-Rule" id="MF_00121"/>
    </source>
</evidence>
<sequence length="491" mass="53532">MATQWEVVIGLETHAQLSTVSKIFSGASTQFGAEPNTQACPVDLALPGVLPVLNRGAVERAIRFGLAIGSTIAPRSIFARKNYFYPDLPKGYQISQYEIPVVQGGQITIQVPANEKAGKPAYEKTVNLTRAHLEEDAGKSLHEDFAGMTGIDLNRAGTPLLEIVTEPEMRSAAEAVAYAKALHALVVWLGICDGNMQEGSFRCDANVSVRPVGQEKFGTRAEIKNLNSFRFLEEAINYEVRRQIELIEDGGEVVQETRLYDPDKRETRSMRSKEDAHDYRYFPDPDLMPLVIGRDWVERVQSGMPELPAAMQQRFVDEYGVSAYDAGVLTSSKAMAAYFESVVAKAGAANAKIVANWLMGDVSSQLNRDGIEIDAIPVSAAQLALLLQRIADGTISNKIAKEIFATIWDEKATDEGAADRIIDAKGLKQISDTGALEAIIDEVLAANAKSVEEFRAGKEKAFNALIGQAMKATKGKANPQQVNELLKKKLG</sequence>
<feature type="chain" id="PRO_1000015940" description="Aspartyl/glutamyl-tRNA(Asn/Gln) amidotransferase subunit B">
    <location>
        <begin position="1"/>
        <end position="491"/>
    </location>
</feature>
<keyword id="KW-0067">ATP-binding</keyword>
<keyword id="KW-0436">Ligase</keyword>
<keyword id="KW-0547">Nucleotide-binding</keyword>
<keyword id="KW-0648">Protein biosynthesis</keyword>
<name>GATB_BURO1</name>
<gene>
    <name evidence="1" type="primary">gatB</name>
    <name type="ordered locus">Bcen_2493</name>
</gene>
<proteinExistence type="inferred from homology"/>
<comment type="function">
    <text evidence="1">Allows the formation of correctly charged Asn-tRNA(Asn) or Gln-tRNA(Gln) through the transamidation of misacylated Asp-tRNA(Asn) or Glu-tRNA(Gln) in organisms which lack either or both of asparaginyl-tRNA or glutaminyl-tRNA synthetases. The reaction takes place in the presence of glutamine and ATP through an activated phospho-Asp-tRNA(Asn) or phospho-Glu-tRNA(Gln).</text>
</comment>
<comment type="catalytic activity">
    <reaction evidence="1">
        <text>L-glutamyl-tRNA(Gln) + L-glutamine + ATP + H2O = L-glutaminyl-tRNA(Gln) + L-glutamate + ADP + phosphate + H(+)</text>
        <dbReference type="Rhea" id="RHEA:17521"/>
        <dbReference type="Rhea" id="RHEA-COMP:9681"/>
        <dbReference type="Rhea" id="RHEA-COMP:9684"/>
        <dbReference type="ChEBI" id="CHEBI:15377"/>
        <dbReference type="ChEBI" id="CHEBI:15378"/>
        <dbReference type="ChEBI" id="CHEBI:29985"/>
        <dbReference type="ChEBI" id="CHEBI:30616"/>
        <dbReference type="ChEBI" id="CHEBI:43474"/>
        <dbReference type="ChEBI" id="CHEBI:58359"/>
        <dbReference type="ChEBI" id="CHEBI:78520"/>
        <dbReference type="ChEBI" id="CHEBI:78521"/>
        <dbReference type="ChEBI" id="CHEBI:456216"/>
    </reaction>
</comment>
<comment type="catalytic activity">
    <reaction evidence="1">
        <text>L-aspartyl-tRNA(Asn) + L-glutamine + ATP + H2O = L-asparaginyl-tRNA(Asn) + L-glutamate + ADP + phosphate + 2 H(+)</text>
        <dbReference type="Rhea" id="RHEA:14513"/>
        <dbReference type="Rhea" id="RHEA-COMP:9674"/>
        <dbReference type="Rhea" id="RHEA-COMP:9677"/>
        <dbReference type="ChEBI" id="CHEBI:15377"/>
        <dbReference type="ChEBI" id="CHEBI:15378"/>
        <dbReference type="ChEBI" id="CHEBI:29985"/>
        <dbReference type="ChEBI" id="CHEBI:30616"/>
        <dbReference type="ChEBI" id="CHEBI:43474"/>
        <dbReference type="ChEBI" id="CHEBI:58359"/>
        <dbReference type="ChEBI" id="CHEBI:78515"/>
        <dbReference type="ChEBI" id="CHEBI:78516"/>
        <dbReference type="ChEBI" id="CHEBI:456216"/>
    </reaction>
</comment>
<comment type="subunit">
    <text evidence="1">Heterotrimer of A, B and C subunits.</text>
</comment>
<comment type="similarity">
    <text evidence="1">Belongs to the GatB/GatE family. GatB subfamily.</text>
</comment>
<accession>Q1BSL3</accession>